<sequence length="389" mass="44486">MAYFNDIAPIKYEGTKTKNMFAFRHYNPEEVVAGKTMEEQLHFALAFWHTITMDGADPFGSATMERPWDLEGGSELDRAHRRVDAFFEIAEKLGVKYYCFHDIDIAPTGNSLKEFYANLDEITDHLLEKQKETGIKLLWNTANMFSNPRYMNGVSTSNRAEVFAYGAAQVKKGLELSKKLGGENYVFWGGREGYESLLNTDMGLEMDHMAKFFHLAIDYAKSINHLPIFLIELKPKEPMTHQYDFDAATALAFLQKYDLDKYFKLNIETNHAWLAGHTFEHELNTARTFGALGSIDANQGNYLLGWDTDEFPTLVIDITLQGWILMHVRLKVQQPSLKTNSCLISLKNVIVHTRRQKLVNLSKMEQQLLKVLLLMLLSMGMTSNLILTT</sequence>
<reference key="1">
    <citation type="journal article" date="2006" name="Proc. Natl. Acad. Sci. U.S.A.">
        <title>Comparative genomics of the lactic acid bacteria.</title>
        <authorList>
            <person name="Makarova K.S."/>
            <person name="Slesarev A."/>
            <person name="Wolf Y.I."/>
            <person name="Sorokin A."/>
            <person name="Mirkin B."/>
            <person name="Koonin E.V."/>
            <person name="Pavlov A."/>
            <person name="Pavlova N."/>
            <person name="Karamychev V."/>
            <person name="Polouchine N."/>
            <person name="Shakhova V."/>
            <person name="Grigoriev I."/>
            <person name="Lou Y."/>
            <person name="Rohksar D."/>
            <person name="Lucas S."/>
            <person name="Huang K."/>
            <person name="Goodstein D.M."/>
            <person name="Hawkins T."/>
            <person name="Plengvidhya V."/>
            <person name="Welker D."/>
            <person name="Hughes J."/>
            <person name="Goh Y."/>
            <person name="Benson A."/>
            <person name="Baldwin K."/>
            <person name="Lee J.-H."/>
            <person name="Diaz-Muniz I."/>
            <person name="Dosti B."/>
            <person name="Smeianov V."/>
            <person name="Wechter W."/>
            <person name="Barabote R."/>
            <person name="Lorca G."/>
            <person name="Altermann E."/>
            <person name="Barrangou R."/>
            <person name="Ganesan B."/>
            <person name="Xie Y."/>
            <person name="Rawsthorne H."/>
            <person name="Tamir D."/>
            <person name="Parker C."/>
            <person name="Breidt F."/>
            <person name="Broadbent J.R."/>
            <person name="Hutkins R."/>
            <person name="O'Sullivan D."/>
            <person name="Steele J."/>
            <person name="Unlu G."/>
            <person name="Saier M.H. Jr."/>
            <person name="Klaenhammer T."/>
            <person name="Richardson P."/>
            <person name="Kozyavkin S."/>
            <person name="Weimer B.C."/>
            <person name="Mills D.A."/>
        </authorList>
    </citation>
    <scope>NUCLEOTIDE SEQUENCE [LARGE SCALE GENOMIC DNA]</scope>
    <source>
        <strain>SK11</strain>
    </source>
</reference>
<gene>
    <name evidence="1" type="primary">xylA</name>
    <name type="ordered locus">LACR_1596</name>
</gene>
<accession>Q02Y75</accession>
<dbReference type="EC" id="5.3.1.5" evidence="1"/>
<dbReference type="EMBL" id="CP000425">
    <property type="protein sequence ID" value="ABJ73097.1"/>
    <property type="molecule type" value="Genomic_DNA"/>
</dbReference>
<dbReference type="SMR" id="Q02Y75"/>
<dbReference type="KEGG" id="llc:LACR_1596"/>
<dbReference type="HOGENOM" id="CLU_037261_2_1_9"/>
<dbReference type="Proteomes" id="UP000000240">
    <property type="component" value="Chromosome"/>
</dbReference>
<dbReference type="GO" id="GO:0005737">
    <property type="term" value="C:cytoplasm"/>
    <property type="evidence" value="ECO:0007669"/>
    <property type="project" value="UniProtKB-SubCell"/>
</dbReference>
<dbReference type="GO" id="GO:0000287">
    <property type="term" value="F:magnesium ion binding"/>
    <property type="evidence" value="ECO:0007669"/>
    <property type="project" value="UniProtKB-UniRule"/>
</dbReference>
<dbReference type="GO" id="GO:0009045">
    <property type="term" value="F:xylose isomerase activity"/>
    <property type="evidence" value="ECO:0007669"/>
    <property type="project" value="UniProtKB-UniRule"/>
</dbReference>
<dbReference type="GO" id="GO:0042732">
    <property type="term" value="P:D-xylose metabolic process"/>
    <property type="evidence" value="ECO:0007669"/>
    <property type="project" value="UniProtKB-UniRule"/>
</dbReference>
<dbReference type="Gene3D" id="3.20.20.150">
    <property type="entry name" value="Divalent-metal-dependent TIM barrel enzymes"/>
    <property type="match status" value="1"/>
</dbReference>
<dbReference type="HAMAP" id="MF_00455">
    <property type="entry name" value="Xylose_isom_A"/>
    <property type="match status" value="1"/>
</dbReference>
<dbReference type="InterPro" id="IPR036237">
    <property type="entry name" value="Xyl_isomerase-like_sf"/>
</dbReference>
<dbReference type="InterPro" id="IPR013022">
    <property type="entry name" value="Xyl_isomerase-like_TIM-brl"/>
</dbReference>
<dbReference type="InterPro" id="IPR013452">
    <property type="entry name" value="Xylose_isom_bac"/>
</dbReference>
<dbReference type="InterPro" id="IPR001998">
    <property type="entry name" value="Xylose_isomerase"/>
</dbReference>
<dbReference type="NCBIfam" id="NF003998">
    <property type="entry name" value="PRK05474.1"/>
    <property type="match status" value="1"/>
</dbReference>
<dbReference type="NCBIfam" id="TIGR02630">
    <property type="entry name" value="xylose_isom_A"/>
    <property type="match status" value="1"/>
</dbReference>
<dbReference type="PANTHER" id="PTHR48408">
    <property type="match status" value="1"/>
</dbReference>
<dbReference type="PANTHER" id="PTHR48408:SF1">
    <property type="entry name" value="XYLOSE ISOMERASE"/>
    <property type="match status" value="1"/>
</dbReference>
<dbReference type="Pfam" id="PF01261">
    <property type="entry name" value="AP_endonuc_2"/>
    <property type="match status" value="1"/>
</dbReference>
<dbReference type="PRINTS" id="PR00688">
    <property type="entry name" value="XYLOSISMRASE"/>
</dbReference>
<dbReference type="SUPFAM" id="SSF51658">
    <property type="entry name" value="Xylose isomerase-like"/>
    <property type="match status" value="1"/>
</dbReference>
<dbReference type="PROSITE" id="PS51415">
    <property type="entry name" value="XYLOSE_ISOMERASE"/>
    <property type="match status" value="1"/>
</dbReference>
<evidence type="ECO:0000255" key="1">
    <source>
        <dbReference type="HAMAP-Rule" id="MF_00455"/>
    </source>
</evidence>
<feature type="chain" id="PRO_1000081031" description="Xylose isomerase">
    <location>
        <begin position="1"/>
        <end position="389"/>
    </location>
</feature>
<feature type="active site" evidence="1">
    <location>
        <position position="101"/>
    </location>
</feature>
<feature type="active site" evidence="1">
    <location>
        <position position="104"/>
    </location>
</feature>
<feature type="binding site" evidence="1">
    <location>
        <position position="232"/>
    </location>
    <ligand>
        <name>Mg(2+)</name>
        <dbReference type="ChEBI" id="CHEBI:18420"/>
        <label>1</label>
    </ligand>
</feature>
<feature type="binding site" evidence="1">
    <location>
        <position position="268"/>
    </location>
    <ligand>
        <name>Mg(2+)</name>
        <dbReference type="ChEBI" id="CHEBI:18420"/>
        <label>1</label>
    </ligand>
</feature>
<feature type="binding site" evidence="1">
    <location>
        <position position="268"/>
    </location>
    <ligand>
        <name>Mg(2+)</name>
        <dbReference type="ChEBI" id="CHEBI:18420"/>
        <label>2</label>
    </ligand>
</feature>
<feature type="binding site" evidence="1">
    <location>
        <position position="271"/>
    </location>
    <ligand>
        <name>Mg(2+)</name>
        <dbReference type="ChEBI" id="CHEBI:18420"/>
        <label>2</label>
    </ligand>
</feature>
<feature type="binding site" evidence="1">
    <location>
        <position position="296"/>
    </location>
    <ligand>
        <name>Mg(2+)</name>
        <dbReference type="ChEBI" id="CHEBI:18420"/>
        <label>1</label>
    </ligand>
</feature>
<feature type="binding site" evidence="1">
    <location>
        <position position="307"/>
    </location>
    <ligand>
        <name>Mg(2+)</name>
        <dbReference type="ChEBI" id="CHEBI:18420"/>
        <label>2</label>
    </ligand>
</feature>
<feature type="binding site" evidence="1">
    <location>
        <position position="309"/>
    </location>
    <ligand>
        <name>Mg(2+)</name>
        <dbReference type="ChEBI" id="CHEBI:18420"/>
        <label>2</label>
    </ligand>
</feature>
<keyword id="KW-0119">Carbohydrate metabolism</keyword>
<keyword id="KW-0963">Cytoplasm</keyword>
<keyword id="KW-0413">Isomerase</keyword>
<keyword id="KW-0460">Magnesium</keyword>
<keyword id="KW-0479">Metal-binding</keyword>
<keyword id="KW-0859">Xylose metabolism</keyword>
<organism>
    <name type="scientific">Lactococcus lactis subsp. cremoris (strain SK11)</name>
    <dbReference type="NCBI Taxonomy" id="272622"/>
    <lineage>
        <taxon>Bacteria</taxon>
        <taxon>Bacillati</taxon>
        <taxon>Bacillota</taxon>
        <taxon>Bacilli</taxon>
        <taxon>Lactobacillales</taxon>
        <taxon>Streptococcaceae</taxon>
        <taxon>Lactococcus</taxon>
        <taxon>Lactococcus cremoris subsp. cremoris</taxon>
    </lineage>
</organism>
<comment type="catalytic activity">
    <reaction evidence="1">
        <text>alpha-D-xylose = alpha-D-xylulofuranose</text>
        <dbReference type="Rhea" id="RHEA:22816"/>
        <dbReference type="ChEBI" id="CHEBI:28518"/>
        <dbReference type="ChEBI" id="CHEBI:188998"/>
        <dbReference type="EC" id="5.3.1.5"/>
    </reaction>
</comment>
<comment type="cofactor">
    <cofactor evidence="1">
        <name>Mg(2+)</name>
        <dbReference type="ChEBI" id="CHEBI:18420"/>
    </cofactor>
    <text evidence="1">Binds 2 magnesium ions per subunit.</text>
</comment>
<comment type="subunit">
    <text evidence="1">Homotetramer.</text>
</comment>
<comment type="subcellular location">
    <subcellularLocation>
        <location evidence="1">Cytoplasm</location>
    </subcellularLocation>
</comment>
<comment type="similarity">
    <text evidence="1">Belongs to the xylose isomerase family.</text>
</comment>
<protein>
    <recommendedName>
        <fullName evidence="1">Xylose isomerase</fullName>
        <ecNumber evidence="1">5.3.1.5</ecNumber>
    </recommendedName>
</protein>
<proteinExistence type="inferred from homology"/>
<name>XYLA_LACLS</name>